<protein>
    <recommendedName>
        <fullName evidence="1">Large ribosomal subunit protein uL3</fullName>
    </recommendedName>
    <alternativeName>
        <fullName evidence="2">50S ribosomal protein L3</fullName>
    </alternativeName>
</protein>
<accession>Q493K8</accession>
<feature type="chain" id="PRO_0000241320" description="Large ribosomal subunit protein uL3">
    <location>
        <begin position="1"/>
        <end position="217"/>
    </location>
</feature>
<feature type="modified residue" description="N5-methylglutamine" evidence="1">
    <location>
        <position position="152"/>
    </location>
</feature>
<comment type="function">
    <text evidence="1">One of the primary rRNA binding proteins, it binds directly near the 3'-end of the 23S rRNA, where it nucleates assembly of the 50S subunit.</text>
</comment>
<comment type="subunit">
    <text evidence="1">Part of the 50S ribosomal subunit. Forms a cluster with proteins L14 and L19.</text>
</comment>
<comment type="PTM">
    <text evidence="1">Methylated by PrmB.</text>
</comment>
<comment type="similarity">
    <text evidence="1">Belongs to the universal ribosomal protein uL3 family.</text>
</comment>
<dbReference type="EMBL" id="CP000016">
    <property type="protein sequence ID" value="AAZ40832.1"/>
    <property type="molecule type" value="Genomic_DNA"/>
</dbReference>
<dbReference type="RefSeq" id="WP_011282739.1">
    <property type="nucleotide sequence ID" value="NC_007292.1"/>
</dbReference>
<dbReference type="SMR" id="Q493K8"/>
<dbReference type="STRING" id="291272.BPEN_198"/>
<dbReference type="KEGG" id="bpn:BPEN_198"/>
<dbReference type="eggNOG" id="COG0087">
    <property type="taxonomic scope" value="Bacteria"/>
</dbReference>
<dbReference type="HOGENOM" id="CLU_044142_4_1_6"/>
<dbReference type="OrthoDB" id="9806135at2"/>
<dbReference type="Proteomes" id="UP000007794">
    <property type="component" value="Chromosome"/>
</dbReference>
<dbReference type="GO" id="GO:0022625">
    <property type="term" value="C:cytosolic large ribosomal subunit"/>
    <property type="evidence" value="ECO:0007669"/>
    <property type="project" value="TreeGrafter"/>
</dbReference>
<dbReference type="GO" id="GO:0019843">
    <property type="term" value="F:rRNA binding"/>
    <property type="evidence" value="ECO:0007669"/>
    <property type="project" value="UniProtKB-UniRule"/>
</dbReference>
<dbReference type="GO" id="GO:0003735">
    <property type="term" value="F:structural constituent of ribosome"/>
    <property type="evidence" value="ECO:0007669"/>
    <property type="project" value="InterPro"/>
</dbReference>
<dbReference type="GO" id="GO:0006412">
    <property type="term" value="P:translation"/>
    <property type="evidence" value="ECO:0007669"/>
    <property type="project" value="UniProtKB-UniRule"/>
</dbReference>
<dbReference type="FunFam" id="2.40.30.10:FF:000004">
    <property type="entry name" value="50S ribosomal protein L3"/>
    <property type="match status" value="1"/>
</dbReference>
<dbReference type="FunFam" id="3.30.160.810:FF:000001">
    <property type="entry name" value="50S ribosomal protein L3"/>
    <property type="match status" value="1"/>
</dbReference>
<dbReference type="Gene3D" id="3.30.160.810">
    <property type="match status" value="1"/>
</dbReference>
<dbReference type="Gene3D" id="2.40.30.10">
    <property type="entry name" value="Translation factors"/>
    <property type="match status" value="1"/>
</dbReference>
<dbReference type="HAMAP" id="MF_01325_B">
    <property type="entry name" value="Ribosomal_uL3_B"/>
    <property type="match status" value="1"/>
</dbReference>
<dbReference type="InterPro" id="IPR000597">
    <property type="entry name" value="Ribosomal_uL3"/>
</dbReference>
<dbReference type="InterPro" id="IPR019927">
    <property type="entry name" value="Ribosomal_uL3_bac/org-type"/>
</dbReference>
<dbReference type="InterPro" id="IPR019926">
    <property type="entry name" value="Ribosomal_uL3_CS"/>
</dbReference>
<dbReference type="InterPro" id="IPR009000">
    <property type="entry name" value="Transl_B-barrel_sf"/>
</dbReference>
<dbReference type="NCBIfam" id="TIGR03625">
    <property type="entry name" value="L3_bact"/>
    <property type="match status" value="1"/>
</dbReference>
<dbReference type="PANTHER" id="PTHR11229">
    <property type="entry name" value="50S RIBOSOMAL PROTEIN L3"/>
    <property type="match status" value="1"/>
</dbReference>
<dbReference type="PANTHER" id="PTHR11229:SF16">
    <property type="entry name" value="LARGE RIBOSOMAL SUBUNIT PROTEIN UL3C"/>
    <property type="match status" value="1"/>
</dbReference>
<dbReference type="Pfam" id="PF00297">
    <property type="entry name" value="Ribosomal_L3"/>
    <property type="match status" value="1"/>
</dbReference>
<dbReference type="SUPFAM" id="SSF50447">
    <property type="entry name" value="Translation proteins"/>
    <property type="match status" value="1"/>
</dbReference>
<dbReference type="PROSITE" id="PS00474">
    <property type="entry name" value="RIBOSOMAL_L3"/>
    <property type="match status" value="1"/>
</dbReference>
<evidence type="ECO:0000255" key="1">
    <source>
        <dbReference type="HAMAP-Rule" id="MF_01325"/>
    </source>
</evidence>
<evidence type="ECO:0000305" key="2"/>
<reference key="1">
    <citation type="journal article" date="2005" name="Genome Res.">
        <title>Genome sequence of Blochmannia pennsylvanicus indicates parallel evolutionary trends among bacterial mutualists of insects.</title>
        <authorList>
            <person name="Degnan P.H."/>
            <person name="Lazarus A.B."/>
            <person name="Wernegreen J.J."/>
        </authorList>
    </citation>
    <scope>NUCLEOTIDE SEQUENCE [LARGE SCALE GENOMIC DNA]</scope>
    <source>
        <strain>BPEN</strain>
    </source>
</reference>
<keyword id="KW-0488">Methylation</keyword>
<keyword id="KW-1185">Reference proteome</keyword>
<keyword id="KW-0687">Ribonucleoprotein</keyword>
<keyword id="KW-0689">Ribosomal protein</keyword>
<keyword id="KW-0694">RNA-binding</keyword>
<keyword id="KW-0699">rRNA-binding</keyword>
<proteinExistence type="inferred from homology"/>
<gene>
    <name evidence="1" type="primary">rplC</name>
    <name type="ordered locus">BPEN_198</name>
</gene>
<sequence length="217" mass="23721">MKGLIGQKLGMTRLFDKDGVSIPVTMIEITPHRVTQIKNIENDGYCAVQVTTGMKNFKHINRPETGHMIKSGVDAGRGVWEFRCEEAGMPQLSLGDIITIQIFKNVKKVDITGISKGKGFAGTIKRWNFHMQDASHGNSLSHRAPGSIGQNQTPGRVFKGKKMAGQLGNYKVTVQNLDVVNVDVKLNLLLVKGAVPGTIGGNLSIKKSVKINIREKM</sequence>
<organism>
    <name type="scientific">Blochmanniella pennsylvanica (strain BPEN)</name>
    <dbReference type="NCBI Taxonomy" id="291272"/>
    <lineage>
        <taxon>Bacteria</taxon>
        <taxon>Pseudomonadati</taxon>
        <taxon>Pseudomonadota</taxon>
        <taxon>Gammaproteobacteria</taxon>
        <taxon>Enterobacterales</taxon>
        <taxon>Enterobacteriaceae</taxon>
        <taxon>ant endosymbionts</taxon>
        <taxon>Candidatus Blochmanniella</taxon>
    </lineage>
</organism>
<name>RL3_BLOPB</name>